<organism>
    <name type="scientific">Homo sapiens</name>
    <name type="common">Human</name>
    <dbReference type="NCBI Taxonomy" id="9606"/>
    <lineage>
        <taxon>Eukaryota</taxon>
        <taxon>Metazoa</taxon>
        <taxon>Chordata</taxon>
        <taxon>Craniata</taxon>
        <taxon>Vertebrata</taxon>
        <taxon>Euteleostomi</taxon>
        <taxon>Mammalia</taxon>
        <taxon>Eutheria</taxon>
        <taxon>Euarchontoglires</taxon>
        <taxon>Primates</taxon>
        <taxon>Haplorrhini</taxon>
        <taxon>Catarrhini</taxon>
        <taxon>Hominidae</taxon>
        <taxon>Homo</taxon>
    </lineage>
</organism>
<sequence length="240" mass="27100">MSKQRGTFSEVSLAQDPKWQQRKPKGNKSSISGTEQEIFQVELNLQNASLNHQGIDKIYDCQGLLPPPEKLTAEVLGIICIVLMATVLKTIVLIPFLEQNNSSPNARTQKARHCGHCPEEWITYSNSCYYIGKERRTWEESLQACASKNSSSLLCIDNEEEMKFLASILPSSWIGVFRNSSHHPWVTINGLAFKHEIKDSDHAERNCAMLHVRGLISDQCGSSRIIRRGFIMLTRLVLNS</sequence>
<evidence type="ECO:0000255" key="1"/>
<evidence type="ECO:0000255" key="2">
    <source>
        <dbReference type="PROSITE-ProRule" id="PRU00040"/>
    </source>
</evidence>
<evidence type="ECO:0000256" key="3">
    <source>
        <dbReference type="SAM" id="MobiDB-lite"/>
    </source>
</evidence>
<evidence type="ECO:0000269" key="4">
    <source>
    </source>
</evidence>
<evidence type="ECO:0000269" key="5">
    <source>
    </source>
</evidence>
<evidence type="ECO:0000269" key="6">
    <source>
    </source>
</evidence>
<evidence type="ECO:0000269" key="7">
    <source>
    </source>
</evidence>
<evidence type="ECO:0000269" key="8">
    <source ref="5"/>
</evidence>
<evidence type="ECO:0000303" key="9">
    <source>
    </source>
</evidence>
<evidence type="ECO:0000305" key="10"/>
<keyword id="KW-0025">Alternative splicing</keyword>
<keyword id="KW-1015">Disulfide bond</keyword>
<keyword id="KW-0325">Glycoprotein</keyword>
<keyword id="KW-0430">Lectin</keyword>
<keyword id="KW-0472">Membrane</keyword>
<keyword id="KW-0675">Receptor</keyword>
<keyword id="KW-1185">Reference proteome</keyword>
<keyword id="KW-0735">Signal-anchor</keyword>
<keyword id="KW-0812">Transmembrane</keyword>
<keyword id="KW-1133">Transmembrane helix</keyword>
<dbReference type="EMBL" id="L14542">
    <property type="protein sequence ID" value="AAA16833.1"/>
    <property type="molecule type" value="mRNA"/>
</dbReference>
<dbReference type="EMBL" id="AJ001685">
    <property type="protein sequence ID" value="CAA04923.1"/>
    <property type="molecule type" value="Genomic_DNA"/>
</dbReference>
<dbReference type="EMBL" id="AF078550">
    <property type="protein sequence ID" value="AAD46108.1"/>
    <property type="molecule type" value="mRNA"/>
</dbReference>
<dbReference type="EMBL" id="AF350016">
    <property type="protein sequence ID" value="AAK83803.1"/>
    <property type="molecule type" value="mRNA"/>
</dbReference>
<dbReference type="EMBL" id="AF350017">
    <property type="protein sequence ID" value="AAK83804.1"/>
    <property type="molecule type" value="mRNA"/>
</dbReference>
<dbReference type="EMBL" id="AF461157">
    <property type="protein sequence ID" value="AAL65232.1"/>
    <property type="molecule type" value="mRNA"/>
</dbReference>
<dbReference type="EMBL" id="AC022075">
    <property type="status" value="NOT_ANNOTATED_CDS"/>
    <property type="molecule type" value="Genomic_DNA"/>
</dbReference>
<dbReference type="EMBL" id="AC068775">
    <property type="status" value="NOT_ANNOTATED_CDS"/>
    <property type="molecule type" value="Genomic_DNA"/>
</dbReference>
<dbReference type="CCDS" id="CCDS31744.1">
    <molecule id="Q07444-2"/>
</dbReference>
<dbReference type="CCDS" id="CCDS41755.1">
    <molecule id="Q07444-1"/>
</dbReference>
<dbReference type="PIR" id="I54524">
    <property type="entry name" value="I54524"/>
</dbReference>
<dbReference type="RefSeq" id="NP_002252.2">
    <molecule id="Q07444-1"/>
    <property type="nucleotide sequence ID" value="NM_002261.3"/>
</dbReference>
<dbReference type="RefSeq" id="NP_031359.2">
    <molecule id="Q07444-2"/>
    <property type="nucleotide sequence ID" value="NM_007333.2"/>
</dbReference>
<dbReference type="SMR" id="Q07444"/>
<dbReference type="BioGRID" id="110022">
    <property type="interactions" value="31"/>
</dbReference>
<dbReference type="ComplexPortal" id="CPX-5903">
    <property type="entry name" value="CD94-NKG2E natural killer receptor complex"/>
</dbReference>
<dbReference type="FunCoup" id="Q07444">
    <property type="interactions" value="204"/>
</dbReference>
<dbReference type="IntAct" id="Q07444">
    <property type="interactions" value="26"/>
</dbReference>
<dbReference type="STRING" id="9606.ENSP00000437563"/>
<dbReference type="GlyCosmos" id="Q07444">
    <property type="glycosylation" value="3 sites, No reported glycans"/>
</dbReference>
<dbReference type="GlyGen" id="Q07444">
    <property type="glycosylation" value="3 sites"/>
</dbReference>
<dbReference type="iPTMnet" id="Q07444"/>
<dbReference type="PhosphoSitePlus" id="Q07444"/>
<dbReference type="BioMuta" id="KLRC3"/>
<dbReference type="DMDM" id="296439288"/>
<dbReference type="MassIVE" id="Q07444"/>
<dbReference type="PaxDb" id="9606-ENSP00000437563"/>
<dbReference type="PeptideAtlas" id="Q07444"/>
<dbReference type="Antibodypedia" id="23313">
    <property type="antibodies" value="60 antibodies from 20 providers"/>
</dbReference>
<dbReference type="DNASU" id="3823"/>
<dbReference type="Ensembl" id="ENST00000381903.2">
    <molecule id="Q07444-2"/>
    <property type="protein sequence ID" value="ENSP00000371328.2"/>
    <property type="gene ID" value="ENSG00000205810.9"/>
</dbReference>
<dbReference type="Ensembl" id="ENST00000396439.7">
    <molecule id="Q07444-1"/>
    <property type="protein sequence ID" value="ENSP00000379716.3"/>
    <property type="gene ID" value="ENSG00000205810.9"/>
</dbReference>
<dbReference type="GeneID" id="3823"/>
<dbReference type="KEGG" id="hsa:3823"/>
<dbReference type="MANE-Select" id="ENST00000396439.7">
    <property type="protein sequence ID" value="ENSP00000379716.3"/>
    <property type="RefSeq nucleotide sequence ID" value="NM_002261.3"/>
    <property type="RefSeq protein sequence ID" value="NP_002252.2"/>
</dbReference>
<dbReference type="UCSC" id="uc001qyf.4">
    <molecule id="Q07444-1"/>
    <property type="organism name" value="human"/>
</dbReference>
<dbReference type="AGR" id="HGNC:6376"/>
<dbReference type="CTD" id="3823"/>
<dbReference type="DisGeNET" id="3823"/>
<dbReference type="GeneCards" id="KLRC3"/>
<dbReference type="HGNC" id="HGNC:6376">
    <property type="gene designation" value="KLRC3"/>
</dbReference>
<dbReference type="HPA" id="ENSG00000205810">
    <property type="expression patterns" value="Group enriched (bone marrow, brain, intestine, lymphoid tissue)"/>
</dbReference>
<dbReference type="MIM" id="602892">
    <property type="type" value="gene"/>
</dbReference>
<dbReference type="neXtProt" id="NX_Q07444"/>
<dbReference type="OpenTargets" id="ENSG00000205810"/>
<dbReference type="PharmGKB" id="PA30165"/>
<dbReference type="VEuPathDB" id="HostDB:ENSG00000205810"/>
<dbReference type="eggNOG" id="ENOG502S6IE">
    <property type="taxonomic scope" value="Eukaryota"/>
</dbReference>
<dbReference type="GeneTree" id="ENSGT00940000163686"/>
<dbReference type="HOGENOM" id="CLU_049894_9_2_1"/>
<dbReference type="InParanoid" id="Q07444"/>
<dbReference type="OMA" id="KEWLIYS"/>
<dbReference type="OrthoDB" id="10059571at2759"/>
<dbReference type="PAN-GO" id="Q07444">
    <property type="GO annotations" value="5 GO annotations based on evolutionary models"/>
</dbReference>
<dbReference type="PhylomeDB" id="Q07444"/>
<dbReference type="TreeFam" id="TF336674"/>
<dbReference type="PathwayCommons" id="Q07444"/>
<dbReference type="SignaLink" id="Q07444"/>
<dbReference type="BioGRID-ORCS" id="3823">
    <property type="hits" value="8 hits in 1104 CRISPR screens"/>
</dbReference>
<dbReference type="GenomeRNAi" id="3823"/>
<dbReference type="Pharos" id="Q07444">
    <property type="development level" value="Tbio"/>
</dbReference>
<dbReference type="PRO" id="PR:Q07444"/>
<dbReference type="Proteomes" id="UP000005640">
    <property type="component" value="Chromosome 12"/>
</dbReference>
<dbReference type="RNAct" id="Q07444">
    <property type="molecule type" value="protein"/>
</dbReference>
<dbReference type="Bgee" id="ENSG00000205810">
    <property type="expression patterns" value="Expressed in corpus callosum and 83 other cell types or tissues"/>
</dbReference>
<dbReference type="GO" id="GO:0009897">
    <property type="term" value="C:external side of plasma membrane"/>
    <property type="evidence" value="ECO:0000318"/>
    <property type="project" value="GO_Central"/>
</dbReference>
<dbReference type="GO" id="GO:0005886">
    <property type="term" value="C:plasma membrane"/>
    <property type="evidence" value="ECO:0000266"/>
    <property type="project" value="ComplexPortal"/>
</dbReference>
<dbReference type="GO" id="GO:0043235">
    <property type="term" value="C:receptor complex"/>
    <property type="evidence" value="ECO:0000250"/>
    <property type="project" value="ComplexPortal"/>
</dbReference>
<dbReference type="GO" id="GO:0030246">
    <property type="term" value="F:carbohydrate binding"/>
    <property type="evidence" value="ECO:0007669"/>
    <property type="project" value="UniProtKB-KW"/>
</dbReference>
<dbReference type="GO" id="GO:0004888">
    <property type="term" value="F:transmembrane signaling receptor activity"/>
    <property type="evidence" value="ECO:0000318"/>
    <property type="project" value="GO_Central"/>
</dbReference>
<dbReference type="GO" id="GO:0006968">
    <property type="term" value="P:cellular defense response"/>
    <property type="evidence" value="ECO:0000304"/>
    <property type="project" value="ProtInc"/>
</dbReference>
<dbReference type="GO" id="GO:0045954">
    <property type="term" value="P:positive regulation of natural killer cell mediated cytotoxicity"/>
    <property type="evidence" value="ECO:0000318"/>
    <property type="project" value="GO_Central"/>
</dbReference>
<dbReference type="GO" id="GO:0032814">
    <property type="term" value="P:regulation of natural killer cell activation"/>
    <property type="evidence" value="ECO:0000303"/>
    <property type="project" value="ComplexPortal"/>
</dbReference>
<dbReference type="GO" id="GO:0002223">
    <property type="term" value="P:stimulatory C-type lectin receptor signaling pathway"/>
    <property type="evidence" value="ECO:0000318"/>
    <property type="project" value="GO_Central"/>
</dbReference>
<dbReference type="CDD" id="cd03593">
    <property type="entry name" value="CLECT_NK_receptors_like"/>
    <property type="match status" value="1"/>
</dbReference>
<dbReference type="FunFam" id="1.10.287.770:FF:000009">
    <property type="entry name" value="NKG2-C type II integral membrane protein"/>
    <property type="match status" value="1"/>
</dbReference>
<dbReference type="Gene3D" id="3.10.100.10">
    <property type="entry name" value="Mannose-Binding Protein A, subunit A"/>
    <property type="match status" value="1"/>
</dbReference>
<dbReference type="Gene3D" id="1.10.287.770">
    <property type="entry name" value="YojJ-like"/>
    <property type="match status" value="1"/>
</dbReference>
<dbReference type="InterPro" id="IPR001304">
    <property type="entry name" value="C-type_lectin-like"/>
</dbReference>
<dbReference type="InterPro" id="IPR016186">
    <property type="entry name" value="C-type_lectin-like/link_sf"/>
</dbReference>
<dbReference type="InterPro" id="IPR016187">
    <property type="entry name" value="CTDL_fold"/>
</dbReference>
<dbReference type="InterPro" id="IPR050919">
    <property type="entry name" value="NKG2/CD94_NK_receptors"/>
</dbReference>
<dbReference type="InterPro" id="IPR033992">
    <property type="entry name" value="NKR-like_CTLD"/>
</dbReference>
<dbReference type="PANTHER" id="PTHR22800">
    <property type="entry name" value="C-TYPE LECTIN PROTEINS"/>
    <property type="match status" value="1"/>
</dbReference>
<dbReference type="PANTHER" id="PTHR22800:SF239">
    <property type="entry name" value="NKG2-E TYPE II INTEGRAL MEMBRANE PROTEIN"/>
    <property type="match status" value="1"/>
</dbReference>
<dbReference type="Pfam" id="PF00059">
    <property type="entry name" value="Lectin_C"/>
    <property type="match status" value="1"/>
</dbReference>
<dbReference type="SMART" id="SM00034">
    <property type="entry name" value="CLECT"/>
    <property type="match status" value="1"/>
</dbReference>
<dbReference type="SUPFAM" id="SSF56436">
    <property type="entry name" value="C-type lectin-like"/>
    <property type="match status" value="1"/>
</dbReference>
<dbReference type="PROSITE" id="PS50041">
    <property type="entry name" value="C_TYPE_LECTIN_2"/>
    <property type="match status" value="1"/>
</dbReference>
<gene>
    <name type="primary">KLRC3</name>
    <name type="synonym">NKG2E</name>
</gene>
<feature type="chain" id="PRO_0000046671" description="NKG2-E type II integral membrane protein">
    <location>
        <begin position="1"/>
        <end position="240"/>
    </location>
</feature>
<feature type="topological domain" description="Cytoplasmic" evidence="1">
    <location>
        <begin position="1"/>
        <end position="70"/>
    </location>
</feature>
<feature type="transmembrane region" description="Helical; Signal-anchor for type II membrane protein" evidence="1">
    <location>
        <begin position="71"/>
        <end position="93"/>
    </location>
</feature>
<feature type="topological domain" description="Extracellular" evidence="1">
    <location>
        <begin position="94"/>
        <end position="240"/>
    </location>
</feature>
<feature type="domain" description="C-type lectin" evidence="2">
    <location>
        <begin position="116"/>
        <end position="230"/>
    </location>
</feature>
<feature type="region of interest" description="Disordered" evidence="3">
    <location>
        <begin position="1"/>
        <end position="31"/>
    </location>
</feature>
<feature type="compositionally biased region" description="Polar residues" evidence="3">
    <location>
        <begin position="1"/>
        <end position="12"/>
    </location>
</feature>
<feature type="glycosylation site" description="N-linked (GlcNAc...) asparagine" evidence="1">
    <location>
        <position position="100"/>
    </location>
</feature>
<feature type="glycosylation site" description="N-linked (GlcNAc...) asparagine" evidence="1">
    <location>
        <position position="149"/>
    </location>
</feature>
<feature type="glycosylation site" description="N-linked (GlcNAc...) asparagine" evidence="1">
    <location>
        <position position="179"/>
    </location>
</feature>
<feature type="disulfide bond" evidence="2">
    <location>
        <begin position="117"/>
        <end position="128"/>
    </location>
</feature>
<feature type="disulfide bond" evidence="2">
    <location>
        <begin position="207"/>
        <end position="220"/>
    </location>
</feature>
<feature type="splice variant" id="VSP_003067" description="In isoform NKG2-H." evidence="9">
    <original>RRGFIMLTRLVLNS</original>
    <variation>VSISFRIKALELAVHQIKFYICSNRNDIMIA</variation>
    <location>
        <begin position="227"/>
        <end position="240"/>
    </location>
</feature>
<feature type="sequence variant" id="VAR_062954" description="In dbSNP:rs2682489." evidence="4 5 6 7">
    <original>S</original>
    <variation>N</variation>
    <location>
        <position position="2"/>
    </location>
</feature>
<feature type="sequence variant" id="VAR_013296" description="In allele NKG2-E*01 and allele NKG2-E*03; requires 2 nucleotide substitutions; dbSNP:rs796361824." evidence="4 6 7">
    <original>W</original>
    <variation>P</variation>
    <location>
        <position position="19"/>
    </location>
</feature>
<feature type="sequence variant" id="VAR_063132" description="In allele NKG2-E*02; dbSNP:rs2682490." evidence="5 8">
    <original>W</original>
    <variation>R</variation>
    <location>
        <position position="19"/>
    </location>
</feature>
<feature type="sequence variant" id="VAR_063133" description="In dbSNP:rs28626640." evidence="4 5 6 8">
    <original>A</original>
    <variation>T</variation>
    <location>
        <position position="106"/>
    </location>
</feature>
<feature type="sequence variant" id="VAR_062955" description="In dbSNP:rs2682494." evidence="4 5 6 7 8">
    <original>H</original>
    <variation>P</variation>
    <location>
        <position position="113"/>
    </location>
</feature>
<feature type="sequence variant" id="VAR_014660" description="In dbSNP:rs1138437.">
    <original>R</original>
    <variation>S</variation>
    <location>
        <position position="135"/>
    </location>
</feature>
<feature type="sequence variant" id="VAR_062956" description="In dbSNP:rs2682495." evidence="5 6 7 8">
    <original>C</original>
    <variation>S</variation>
    <location>
        <position position="155"/>
    </location>
</feature>
<feature type="sequence conflict" description="In Ref. 5; AAL65232." evidence="10" ref="5">
    <original>A</original>
    <variation>P</variation>
    <location>
        <position position="48"/>
    </location>
</feature>
<feature type="sequence conflict" description="In Ref. 5; AAL65232." evidence="10" ref="5">
    <original>E</original>
    <variation>G</variation>
    <location>
        <position position="134"/>
    </location>
</feature>
<name>NKG2E_HUMAN</name>
<accession>Q07444</accession>
<accession>Q8WXA4</accession>
<accession>Q96RL0</accession>
<accession>Q9UP04</accession>
<protein>
    <recommendedName>
        <fullName>NKG2-E type II integral membrane protein</fullName>
    </recommendedName>
    <alternativeName>
        <fullName>NK cell receptor E</fullName>
    </alternativeName>
    <alternativeName>
        <fullName>NKG2-E-activating NK receptor</fullName>
    </alternativeName>
</protein>
<reference key="1">
    <citation type="journal article" date="1994" name="Immunogenetics">
        <title>Natural killer lectin-like receptors have divergent carboxy-termini, distinct from C-type lectins.</title>
        <authorList>
            <person name="Adamkiewicz T.V."/>
            <person name="McSherry C."/>
            <person name="Bach F.H."/>
            <person name="Houchins J.P."/>
        </authorList>
    </citation>
    <scope>NUCLEOTIDE SEQUENCE [MRNA] (ISOFORM NKG2-E)</scope>
    <scope>VARIANTS ASN-2; PRO-19; THR-106; PRO-113 AND SER-155</scope>
</reference>
<reference key="2">
    <citation type="journal article" date="1998" name="Immunogenetics">
        <title>The genomic organization of NKG2C, E, F, and D receptor genes in the human natural killer gene complex.</title>
        <authorList>
            <person name="Glienke J."/>
            <person name="Sobanov Y."/>
            <person name="Brostjan C."/>
            <person name="Steffens C."/>
            <person name="Nguyen C."/>
            <person name="Lehrach H."/>
            <person name="Hofer E."/>
            <person name="Francis F."/>
        </authorList>
    </citation>
    <scope>NUCLEOTIDE SEQUENCE [GENOMIC DNA] (ISOFORM NKG2-E)</scope>
    <scope>VARIANTS ASN-2; PRO-19; PRO-113 AND SER-155</scope>
</reference>
<reference key="3">
    <citation type="journal article" date="1999" name="J. Immunol.">
        <title>Triggering of effector functions on a CD8+ T cell clone upon the aggregation of an activatory CD94/kp39 heterodimer.</title>
        <authorList>
            <person name="Bellon T."/>
            <person name="Heredia A.B."/>
            <person name="Llano M."/>
            <person name="Minguela A."/>
            <person name="Rodriguez A."/>
            <person name="Lopez-Botet M."/>
            <person name="Aparicio P."/>
        </authorList>
    </citation>
    <scope>NUCLEOTIDE SEQUENCE [MRNA] (ISOFORM NKG2-H)</scope>
    <scope>VARIANTS ASN-2; PRO-19; THR-106 AND PRO-113</scope>
</reference>
<reference key="4">
    <citation type="journal article" date="2002" name="J. Immunol.">
        <title>Conservation and variation in human and common chimpanzee CD94 and NKG2 genes.</title>
        <authorList>
            <person name="Shum B.P."/>
            <person name="Flodin L.R."/>
            <person name="Muir D.G."/>
            <person name="Rajalingam R."/>
            <person name="Khakoo S.I."/>
            <person name="Cleland S."/>
            <person name="Guethlein L.A."/>
            <person name="Uhrberg M."/>
            <person name="Parham P."/>
        </authorList>
    </citation>
    <scope>NUCLEOTIDE SEQUENCE [MRNA] (ISOFORM NKG2-E)</scope>
    <scope>VARIANTS ASN-2; ARG-19; THR-106; PRO-113 AND SER-155</scope>
</reference>
<reference key="5">
    <citation type="submission" date="2001-12" db="EMBL/GenBank/DDBJ databases">
        <title>Identification of the NKG2E gene in large granular lymphocytic leukemia (LGL).</title>
        <authorList>
            <person name="Kothapalli R."/>
            <person name="Kusmartseva I."/>
            <person name="Loughran T.P. Jr."/>
        </authorList>
    </citation>
    <scope>NUCLEOTIDE SEQUENCE [MRNA]</scope>
    <scope>VARIANTS ARG-19; THR-106; PRO-113 AND SER-155</scope>
</reference>
<reference key="6">
    <citation type="journal article" date="2006" name="Nature">
        <title>The finished DNA sequence of human chromosome 12.</title>
        <authorList>
            <person name="Scherer S.E."/>
            <person name="Muzny D.M."/>
            <person name="Buhay C.J."/>
            <person name="Chen R."/>
            <person name="Cree A."/>
            <person name="Ding Y."/>
            <person name="Dugan-Rocha S."/>
            <person name="Gill R."/>
            <person name="Gunaratne P."/>
            <person name="Harris R.A."/>
            <person name="Hawes A.C."/>
            <person name="Hernandez J."/>
            <person name="Hodgson A.V."/>
            <person name="Hume J."/>
            <person name="Jackson A."/>
            <person name="Khan Z.M."/>
            <person name="Kovar-Smith C."/>
            <person name="Lewis L.R."/>
            <person name="Lozado R.J."/>
            <person name="Metzker M.L."/>
            <person name="Milosavljevic A."/>
            <person name="Miner G.R."/>
            <person name="Montgomery K.T."/>
            <person name="Morgan M.B."/>
            <person name="Nazareth L.V."/>
            <person name="Scott G."/>
            <person name="Sodergren E."/>
            <person name="Song X.-Z."/>
            <person name="Steffen D."/>
            <person name="Lovering R.C."/>
            <person name="Wheeler D.A."/>
            <person name="Worley K.C."/>
            <person name="Yuan Y."/>
            <person name="Zhang Z."/>
            <person name="Adams C.Q."/>
            <person name="Ansari-Lari M.A."/>
            <person name="Ayele M."/>
            <person name="Brown M.J."/>
            <person name="Chen G."/>
            <person name="Chen Z."/>
            <person name="Clerc-Blankenburg K.P."/>
            <person name="Davis C."/>
            <person name="Delgado O."/>
            <person name="Dinh H.H."/>
            <person name="Draper H."/>
            <person name="Gonzalez-Garay M.L."/>
            <person name="Havlak P."/>
            <person name="Jackson L.R."/>
            <person name="Jacob L.S."/>
            <person name="Kelly S.H."/>
            <person name="Li L."/>
            <person name="Li Z."/>
            <person name="Liu J."/>
            <person name="Liu W."/>
            <person name="Lu J."/>
            <person name="Maheshwari M."/>
            <person name="Nguyen B.-V."/>
            <person name="Okwuonu G.O."/>
            <person name="Pasternak S."/>
            <person name="Perez L.M."/>
            <person name="Plopper F.J.H."/>
            <person name="Santibanez J."/>
            <person name="Shen H."/>
            <person name="Tabor P.E."/>
            <person name="Verduzco D."/>
            <person name="Waldron L."/>
            <person name="Wang Q."/>
            <person name="Williams G.A."/>
            <person name="Zhang J."/>
            <person name="Zhou J."/>
            <person name="Allen C.C."/>
            <person name="Amin A.G."/>
            <person name="Anyalebechi V."/>
            <person name="Bailey M."/>
            <person name="Barbaria J.A."/>
            <person name="Bimage K.E."/>
            <person name="Bryant N.P."/>
            <person name="Burch P.E."/>
            <person name="Burkett C.E."/>
            <person name="Burrell K.L."/>
            <person name="Calderon E."/>
            <person name="Cardenas V."/>
            <person name="Carter K."/>
            <person name="Casias K."/>
            <person name="Cavazos I."/>
            <person name="Cavazos S.R."/>
            <person name="Ceasar H."/>
            <person name="Chacko J."/>
            <person name="Chan S.N."/>
            <person name="Chavez D."/>
            <person name="Christopoulos C."/>
            <person name="Chu J."/>
            <person name="Cockrell R."/>
            <person name="Cox C.D."/>
            <person name="Dang M."/>
            <person name="Dathorne S.R."/>
            <person name="David R."/>
            <person name="Davis C.M."/>
            <person name="Davy-Carroll L."/>
            <person name="Deshazo D.R."/>
            <person name="Donlin J.E."/>
            <person name="D'Souza L."/>
            <person name="Eaves K.A."/>
            <person name="Egan A."/>
            <person name="Emery-Cohen A.J."/>
            <person name="Escotto M."/>
            <person name="Flagg N."/>
            <person name="Forbes L.D."/>
            <person name="Gabisi A.M."/>
            <person name="Garza M."/>
            <person name="Hamilton C."/>
            <person name="Henderson N."/>
            <person name="Hernandez O."/>
            <person name="Hines S."/>
            <person name="Hogues M.E."/>
            <person name="Huang M."/>
            <person name="Idlebird D.G."/>
            <person name="Johnson R."/>
            <person name="Jolivet A."/>
            <person name="Jones S."/>
            <person name="Kagan R."/>
            <person name="King L.M."/>
            <person name="Leal B."/>
            <person name="Lebow H."/>
            <person name="Lee S."/>
            <person name="LeVan J.M."/>
            <person name="Lewis L.C."/>
            <person name="London P."/>
            <person name="Lorensuhewa L.M."/>
            <person name="Loulseged H."/>
            <person name="Lovett D.A."/>
            <person name="Lucier A."/>
            <person name="Lucier R.L."/>
            <person name="Ma J."/>
            <person name="Madu R.C."/>
            <person name="Mapua P."/>
            <person name="Martindale A.D."/>
            <person name="Martinez E."/>
            <person name="Massey E."/>
            <person name="Mawhiney S."/>
            <person name="Meador M.G."/>
            <person name="Mendez S."/>
            <person name="Mercado C."/>
            <person name="Mercado I.C."/>
            <person name="Merritt C.E."/>
            <person name="Miner Z.L."/>
            <person name="Minja E."/>
            <person name="Mitchell T."/>
            <person name="Mohabbat F."/>
            <person name="Mohabbat K."/>
            <person name="Montgomery B."/>
            <person name="Moore N."/>
            <person name="Morris S."/>
            <person name="Munidasa M."/>
            <person name="Ngo R.N."/>
            <person name="Nguyen N.B."/>
            <person name="Nickerson E."/>
            <person name="Nwaokelemeh O.O."/>
            <person name="Nwokenkwo S."/>
            <person name="Obregon M."/>
            <person name="Oguh M."/>
            <person name="Oragunye N."/>
            <person name="Oviedo R.J."/>
            <person name="Parish B.J."/>
            <person name="Parker D.N."/>
            <person name="Parrish J."/>
            <person name="Parks K.L."/>
            <person name="Paul H.A."/>
            <person name="Payton B.A."/>
            <person name="Perez A."/>
            <person name="Perrin W."/>
            <person name="Pickens A."/>
            <person name="Primus E.L."/>
            <person name="Pu L.-L."/>
            <person name="Puazo M."/>
            <person name="Quiles M.M."/>
            <person name="Quiroz J.B."/>
            <person name="Rabata D."/>
            <person name="Reeves K."/>
            <person name="Ruiz S.J."/>
            <person name="Shao H."/>
            <person name="Sisson I."/>
            <person name="Sonaike T."/>
            <person name="Sorelle R.P."/>
            <person name="Sutton A.E."/>
            <person name="Svatek A.F."/>
            <person name="Svetz L.A."/>
            <person name="Tamerisa K.S."/>
            <person name="Taylor T.R."/>
            <person name="Teague B."/>
            <person name="Thomas N."/>
            <person name="Thorn R.D."/>
            <person name="Trejos Z.Y."/>
            <person name="Trevino B.K."/>
            <person name="Ukegbu O.N."/>
            <person name="Urban J.B."/>
            <person name="Vasquez L.I."/>
            <person name="Vera V.A."/>
            <person name="Villasana D.M."/>
            <person name="Wang L."/>
            <person name="Ward-Moore S."/>
            <person name="Warren J.T."/>
            <person name="Wei X."/>
            <person name="White F."/>
            <person name="Williamson A.L."/>
            <person name="Wleczyk R."/>
            <person name="Wooden H.S."/>
            <person name="Wooden S.H."/>
            <person name="Yen J."/>
            <person name="Yoon L."/>
            <person name="Yoon V."/>
            <person name="Zorrilla S.E."/>
            <person name="Nelson D."/>
            <person name="Kucherlapati R."/>
            <person name="Weinstock G."/>
            <person name="Gibbs R.A."/>
        </authorList>
    </citation>
    <scope>NUCLEOTIDE SEQUENCE [LARGE SCALE GENOMIC DNA]</scope>
</reference>
<proteinExistence type="evidence at transcript level"/>
<comment type="function">
    <text>Plays a role as a receptor for the recognition of MHC class I HLA-E molecules by NK cells and some cytotoxic T-cells.</text>
</comment>
<comment type="subunit">
    <text>Can form disulfide-bonded heterodimer with CD94.</text>
</comment>
<comment type="subcellular location">
    <subcellularLocation>
        <location>Membrane</location>
        <topology>Single-pass type II membrane protein</topology>
    </subcellularLocation>
</comment>
<comment type="alternative products">
    <event type="alternative splicing"/>
    <isoform>
        <id>Q07444-1</id>
        <name>NKG2-E</name>
        <sequence type="displayed"/>
    </isoform>
    <isoform>
        <id>Q07444-2</id>
        <name>NKG2-H</name>
        <sequence type="described" ref="VSP_003067"/>
    </isoform>
</comment>
<comment type="tissue specificity">
    <text>Natural killer cells.</text>
</comment>
<comment type="online information" name="Functional Glycomics Gateway - Glycan Binding">
    <link uri="http://www.functionalglycomics.org/glycomics/GBPServlet?&amp;operationType=view&amp;cbpId=cbp_hum_Ctlect_247"/>
    <text>NKG-2E</text>
</comment>